<gene>
    <name type="primary">hcl</name>
</gene>
<keyword id="KW-0067">ATP-binding</keyword>
<keyword id="KW-0903">Direct protein sequencing</keyword>
<keyword id="KW-0436">Ligase</keyword>
<keyword id="KW-0547">Nucleotide-binding</keyword>
<proteinExistence type="evidence at protein level"/>
<accession>Q9AJS8</accession>
<comment type="function">
    <text evidence="1">Catalyzes the ligation of 3-hydroxybenzoate or 4-hydroxybenzoate and CoA at the expense of ATP. The enzyme shows low activity towards benzoate, 4-aminobenzoate, 3-aminobenzoate, 3-fluorobenzoate, 4-fluorobenzoate, 3-chlorobenzoate, and 4-chlorobenzoate. There is no activity with 3,4-dihydroxybenzoate, 2,3-dihydroxybenzoate, and 2-hydroxybenzoate as substrates.</text>
</comment>
<comment type="catalytic activity">
    <reaction evidence="1">
        <text>4-hydroxybenzoate + ATP + CoA = 4-hydroxybenzoyl-CoA + AMP + diphosphate</text>
        <dbReference type="Rhea" id="RHEA:23116"/>
        <dbReference type="ChEBI" id="CHEBI:17879"/>
        <dbReference type="ChEBI" id="CHEBI:30616"/>
        <dbReference type="ChEBI" id="CHEBI:33019"/>
        <dbReference type="ChEBI" id="CHEBI:57287"/>
        <dbReference type="ChEBI" id="CHEBI:57356"/>
        <dbReference type="ChEBI" id="CHEBI:456215"/>
        <dbReference type="EC" id="6.2.1.27"/>
    </reaction>
</comment>
<comment type="catalytic activity">
    <reaction evidence="1">
        <text>3-hydroxybenzoate + ATP + CoA = 3-hydroxybenzoyl-CoA + AMP + diphosphate</text>
        <dbReference type="Rhea" id="RHEA:25070"/>
        <dbReference type="ChEBI" id="CHEBI:16193"/>
        <dbReference type="ChEBI" id="CHEBI:30616"/>
        <dbReference type="ChEBI" id="CHEBI:33019"/>
        <dbReference type="ChEBI" id="CHEBI:57287"/>
        <dbReference type="ChEBI" id="CHEBI:57342"/>
        <dbReference type="ChEBI" id="CHEBI:456215"/>
        <dbReference type="EC" id="6.2.1.37"/>
    </reaction>
</comment>
<comment type="biophysicochemical properties">
    <kinetics>
        <KM evidence="1">60 uM for 3-hydroxybenzoate</KM>
        <KM evidence="1">65 uM for 4-hydroxybenzoate</KM>
        <Vmax evidence="1">4.1 umol/min/mg enzyme with 3-hydroxybenzoate as substrate</Vmax>
        <Vmax evidence="1">3.4 umol/min/mg enzyme with 4-hydroxybenzoate as substrate</Vmax>
    </kinetics>
    <phDependence>
        <text evidence="1">Optimum pH is above 9.</text>
    </phDependence>
</comment>
<comment type="induction">
    <text evidence="1">By 3-hydroxybenzoate.</text>
</comment>
<comment type="similarity">
    <text evidence="2">Belongs to the ATP-dependent AMP-binding enzyme family. Benzoate-CoA ligase subfamily.</text>
</comment>
<protein>
    <recommendedName>
        <fullName>3-hydroxybenzoate--CoA/4-hydroxybenzoate--CoA ligase</fullName>
        <ecNumber>6.2.1.27</ecNumber>
        <ecNumber>6.2.1.37</ecNumber>
    </recommendedName>
    <alternativeName>
        <fullName>3-hydroxybenzoyl-CoA synthetase</fullName>
    </alternativeName>
</protein>
<evidence type="ECO:0000269" key="1">
    <source>
    </source>
</evidence>
<evidence type="ECO:0000305" key="2"/>
<organism>
    <name type="scientific">Thauera aromatica</name>
    <dbReference type="NCBI Taxonomy" id="59405"/>
    <lineage>
        <taxon>Bacteria</taxon>
        <taxon>Pseudomonadati</taxon>
        <taxon>Pseudomonadota</taxon>
        <taxon>Betaproteobacteria</taxon>
        <taxon>Rhodocyclales</taxon>
        <taxon>Zoogloeaceae</taxon>
        <taxon>Thauera</taxon>
    </lineage>
</organism>
<name>3HBCL_THAAR</name>
<dbReference type="EC" id="6.2.1.27"/>
<dbReference type="EC" id="6.2.1.37"/>
<dbReference type="EMBL" id="AJ278289">
    <property type="protein sequence ID" value="CAC28158.1"/>
    <property type="molecule type" value="Genomic_DNA"/>
</dbReference>
<dbReference type="SMR" id="Q9AJS8"/>
<dbReference type="KEGG" id="ag:CAC28158"/>
<dbReference type="BioCyc" id="MetaCyc:OHBENCOATHAUERA-MONOMER"/>
<dbReference type="BRENDA" id="6.2.1.27">
    <property type="organism ID" value="6271"/>
</dbReference>
<dbReference type="BRENDA" id="6.2.1.37">
    <property type="organism ID" value="6271"/>
</dbReference>
<dbReference type="SABIO-RK" id="Q9AJS8"/>
<dbReference type="GO" id="GO:0018859">
    <property type="term" value="F:4-hydroxybenzoate-CoA ligase activity"/>
    <property type="evidence" value="ECO:0007669"/>
    <property type="project" value="UniProtKB-EC"/>
</dbReference>
<dbReference type="GO" id="GO:0005524">
    <property type="term" value="F:ATP binding"/>
    <property type="evidence" value="ECO:0007669"/>
    <property type="project" value="UniProtKB-KW"/>
</dbReference>
<dbReference type="GO" id="GO:0044550">
    <property type="term" value="P:secondary metabolite biosynthetic process"/>
    <property type="evidence" value="ECO:0007669"/>
    <property type="project" value="TreeGrafter"/>
</dbReference>
<dbReference type="CDD" id="cd05919">
    <property type="entry name" value="BCL_like"/>
    <property type="match status" value="1"/>
</dbReference>
<dbReference type="Gene3D" id="3.30.300.30">
    <property type="match status" value="1"/>
</dbReference>
<dbReference type="Gene3D" id="3.40.50.12780">
    <property type="entry name" value="N-terminal domain of ligase-like"/>
    <property type="match status" value="1"/>
</dbReference>
<dbReference type="InterPro" id="IPR025110">
    <property type="entry name" value="AMP-bd_C"/>
</dbReference>
<dbReference type="InterPro" id="IPR045851">
    <property type="entry name" value="AMP-bd_C_sf"/>
</dbReference>
<dbReference type="InterPro" id="IPR000873">
    <property type="entry name" value="AMP-dep_synth/lig_dom"/>
</dbReference>
<dbReference type="InterPro" id="IPR042099">
    <property type="entry name" value="ANL_N_sf"/>
</dbReference>
<dbReference type="InterPro" id="IPR011957">
    <property type="entry name" value="Benz_CoA_lig"/>
</dbReference>
<dbReference type="NCBIfam" id="TIGR02262">
    <property type="entry name" value="benz_CoA_lig"/>
    <property type="match status" value="1"/>
</dbReference>
<dbReference type="PANTHER" id="PTHR43352">
    <property type="entry name" value="ACETYL-COA SYNTHETASE"/>
    <property type="match status" value="1"/>
</dbReference>
<dbReference type="PANTHER" id="PTHR43352:SF1">
    <property type="entry name" value="ANTHRANILATE--COA LIGASE"/>
    <property type="match status" value="1"/>
</dbReference>
<dbReference type="Pfam" id="PF00501">
    <property type="entry name" value="AMP-binding"/>
    <property type="match status" value="1"/>
</dbReference>
<dbReference type="Pfam" id="PF13193">
    <property type="entry name" value="AMP-binding_C"/>
    <property type="match status" value="1"/>
</dbReference>
<dbReference type="SUPFAM" id="SSF56801">
    <property type="entry name" value="Acetyl-CoA synthetase-like"/>
    <property type="match status" value="1"/>
</dbReference>
<sequence>MSEQLQPQQSMNAADEIIGRPLAQGLGEQTAMLCAERSITYRELDAATNRHGNALRAHGVGKGDRVLFLMDDSPELVAAYLGTLRIGAVAVALNVRLAPRDVLYVIQDSACRLLYIDAEFLHLYQQIAGELEQPPQVVVRGDEAPAPAIIAFKHFLDGQAATLESVQVAPDDVAYWLYSSGTTGRPKAVMHAHRSVLIADRLEREYFGIKPGDRVFTTSKMFFGWSLGHSLMGGLQCGATVIVAPGWPDAERVMATAARHRPTILFSTPVMYRNLLREGAGESAAMRDIRHFVSAGEKLPENIGQQWLDTFGIPITEGIGASETVFLFLCARPDAYRIGSCGKRVPWAEVRLLDELGNEITTPDTPGLIAIRMASQFVGYWKLPETTEKALRDGWYYPGDMFSFDADGFWYHNGRADDMLKISGQWVSPGEIESCASAVPGIAEAVVVAVPNDDGLTRLTLFIVPEDPSASQQKLSEAWMTTLRGTLSIYKCPRTIQFLEELPRTATGKVQKYRLRDMLQATL</sequence>
<reference key="1">
    <citation type="journal article" date="2001" name="J. Bacteriol.">
        <title>Anaerobic metabolism of 3-hydroxybenzoate by the denitrifying bacterium Thauera aromatica.</title>
        <authorList>
            <person name="Laempe D."/>
            <person name="Jahn M."/>
            <person name="Breese K."/>
            <person name="Schaegger H."/>
            <person name="Fuchs G."/>
        </authorList>
    </citation>
    <scope>NUCLEOTIDE SEQUENCE [GENOMIC DNA]</scope>
    <scope>PROTEIN SEQUENCE OF 2-7</scope>
    <scope>FUNCTION</scope>
    <scope>CATALYTIC ACTIVITY</scope>
    <scope>SUBSTRATE SPECIFICITY</scope>
    <scope>BIOPHYSICOCHEMICAL PROPERTIES</scope>
    <scope>INDUCTION</scope>
    <source>
        <strain>DSM 6984 / CIP 107765 / K172</strain>
    </source>
</reference>
<feature type="initiator methionine" description="Removed" evidence="1">
    <location>
        <position position="1"/>
    </location>
</feature>
<feature type="chain" id="PRO_0000350736" description="3-hydroxybenzoate--CoA/4-hydroxybenzoate--CoA ligase">
    <location>
        <begin position="2"/>
        <end position="523"/>
    </location>
</feature>